<organism>
    <name type="scientific">Mycobacteroides abscessus (strain ATCC 19977 / DSM 44196 / CCUG 20993 / CIP 104536 / JCM 13569 / NCTC 13031 / TMC 1543 / L948)</name>
    <name type="common">Mycobacterium abscessus</name>
    <dbReference type="NCBI Taxonomy" id="561007"/>
    <lineage>
        <taxon>Bacteria</taxon>
        <taxon>Bacillati</taxon>
        <taxon>Actinomycetota</taxon>
        <taxon>Actinomycetes</taxon>
        <taxon>Mycobacteriales</taxon>
        <taxon>Mycobacteriaceae</taxon>
        <taxon>Mycobacteroides</taxon>
        <taxon>Mycobacteroides abscessus</taxon>
    </lineage>
</organism>
<reference key="1">
    <citation type="journal article" date="2009" name="PLoS ONE">
        <title>Non mycobacterial virulence genes in the genome of the emerging pathogen Mycobacterium abscessus.</title>
        <authorList>
            <person name="Ripoll F."/>
            <person name="Pasek S."/>
            <person name="Schenowitz C."/>
            <person name="Dossat C."/>
            <person name="Barbe V."/>
            <person name="Rottman M."/>
            <person name="Macheras E."/>
            <person name="Heym B."/>
            <person name="Herrmann J.L."/>
            <person name="Daffe M."/>
            <person name="Brosch R."/>
            <person name="Risler J.L."/>
            <person name="Gaillard J.L."/>
        </authorList>
    </citation>
    <scope>NUCLEOTIDE SEQUENCE [LARGE SCALE GENOMIC DNA]</scope>
    <source>
        <strain>ATCC 19977 / DSM 44196 / CCUG 20993 / CIP 104536 / JCM 13569 / NCTC 13031 / TMC 1543 / L948</strain>
    </source>
</reference>
<accession>B1MK43</accession>
<proteinExistence type="inferred from homology"/>
<feature type="chain" id="PRO_0000380596" description="Uncharacterized methyltransferase MAB_4481">
    <location>
        <begin position="1"/>
        <end position="259"/>
    </location>
</feature>
<comment type="similarity">
    <text evidence="1">Belongs to the methyltransferase superfamily.</text>
</comment>
<keyword id="KW-0489">Methyltransferase</keyword>
<keyword id="KW-1185">Reference proteome</keyword>
<keyword id="KW-0808">Transferase</keyword>
<gene>
    <name type="ordered locus">MAB_4481</name>
</gene>
<sequence>MPDITDLFAQRATLRRSTSLLTAFRFEQSAPERFYGTLAQDTVHLITDLWQQAEGVALRGRTVLDVGGGPGYFASAFADAGARYIGVEPDPREMHAAPQGHRGIQDPRTTYLRASGMALPLADNSVDICLSSNVAEHVPQPWRLGEEMLRVTRPGGLAILSYTVWLGPFGGHEMGLTHYFGGARAARWYTRKHGHPPKNNYGSSLFPVSVRDGLRWARDTGTLTAAFPRYHPKWAWWITKIPALREVLVSNLVLVLRPR</sequence>
<evidence type="ECO:0000305" key="1"/>
<dbReference type="EC" id="2.1.1.-"/>
<dbReference type="EMBL" id="CU458896">
    <property type="protein sequence ID" value="CAM64550.1"/>
    <property type="molecule type" value="Genomic_DNA"/>
</dbReference>
<dbReference type="RefSeq" id="WP_005079865.1">
    <property type="nucleotide sequence ID" value="NZ_MLCG01000001.1"/>
</dbReference>
<dbReference type="SMR" id="B1MK43"/>
<dbReference type="GeneID" id="93381425"/>
<dbReference type="KEGG" id="mab:MAB_4481"/>
<dbReference type="Proteomes" id="UP000007137">
    <property type="component" value="Chromosome"/>
</dbReference>
<dbReference type="GO" id="GO:0008757">
    <property type="term" value="F:S-adenosylmethionine-dependent methyltransferase activity"/>
    <property type="evidence" value="ECO:0007669"/>
    <property type="project" value="InterPro"/>
</dbReference>
<dbReference type="GO" id="GO:0032259">
    <property type="term" value="P:methylation"/>
    <property type="evidence" value="ECO:0007669"/>
    <property type="project" value="UniProtKB-KW"/>
</dbReference>
<dbReference type="CDD" id="cd02440">
    <property type="entry name" value="AdoMet_MTases"/>
    <property type="match status" value="1"/>
</dbReference>
<dbReference type="Gene3D" id="3.40.50.150">
    <property type="entry name" value="Vaccinia Virus protein VP39"/>
    <property type="match status" value="1"/>
</dbReference>
<dbReference type="InterPro" id="IPR013216">
    <property type="entry name" value="Methyltransf_11"/>
</dbReference>
<dbReference type="InterPro" id="IPR029063">
    <property type="entry name" value="SAM-dependent_MTases_sf"/>
</dbReference>
<dbReference type="PANTHER" id="PTHR43591:SF24">
    <property type="entry name" value="2-METHOXY-6-POLYPRENYL-1,4-BENZOQUINOL METHYLASE, MITOCHONDRIAL"/>
    <property type="match status" value="1"/>
</dbReference>
<dbReference type="PANTHER" id="PTHR43591">
    <property type="entry name" value="METHYLTRANSFERASE"/>
    <property type="match status" value="1"/>
</dbReference>
<dbReference type="Pfam" id="PF08241">
    <property type="entry name" value="Methyltransf_11"/>
    <property type="match status" value="1"/>
</dbReference>
<dbReference type="SUPFAM" id="SSF53335">
    <property type="entry name" value="S-adenosyl-L-methionine-dependent methyltransferases"/>
    <property type="match status" value="1"/>
</dbReference>
<name>Y4481_MYCA9</name>
<protein>
    <recommendedName>
        <fullName>Uncharacterized methyltransferase MAB_4481</fullName>
        <ecNumber>2.1.1.-</ecNumber>
    </recommendedName>
</protein>